<gene>
    <name type="ORF">ORF2</name>
</gene>
<comment type="function">
    <molecule>Capsid protein VP1</molecule>
    <text evidence="3">Capsid protein self assembles to form an icosahedral capsid with a T=3 symmetry, about 38 nm in diameter, and consisting of 180 capsid proteins. A smaller form of capsid with a diameter of 23 nm might be capsid proteins assembled as icosahedron with T=1 symmetry. The capsid encapsulates the genomic RNA and is decorated with VP2 proteins. Attaches virion to target cells by binding histo-blood group antigens (HBGAs) present on gastroduodenal epithelial cells.</text>
</comment>
<comment type="function">
    <molecule>Soluble capsid protein</molecule>
    <text evidence="3">The soluble capsid protein may play a role in viral immunoevasion.</text>
</comment>
<comment type="subunit">
    <molecule>Capsid protein VP1</molecule>
    <text evidence="2 3">Homodimer. Homomultimer (By similarity). Interacts with the minor capsid protein VP2 (By similarity). Interacts (via C-terminus) with host type I histo-blood group structures antigens at the surface of target cells (By similarity).</text>
</comment>
<comment type="subcellular location">
    <molecule>Capsid protein VP1</molecule>
    <subcellularLocation>
        <location evidence="3">Virion</location>
    </subcellularLocation>
    <subcellularLocation>
        <location evidence="3">Host cytoplasm</location>
    </subcellularLocation>
</comment>
<comment type="domain">
    <molecule>Capsid protein VP1</molecule>
    <text evidence="3">The shell domain (S domain) contains elements essential for the formation of the icosahedron. The Protruding domain (P domain) is divided into sub-domains P1 and P2. P domain interacts in dimeric contacts that increase the stability of the capsid and form the protrusions on the virion. A hypervariable region in P2 is thought to play an important role in receptor binding and immune reactivity.</text>
</comment>
<comment type="PTM">
    <molecule>Capsid protein VP1</molecule>
    <text evidence="3">May be cleaved by host protease to generate soluble capsid protein. Assembled capsid cannot be cleaved.</text>
</comment>
<comment type="similarity">
    <text evidence="5">Belongs to the caliciviridae capsid protein family.</text>
</comment>
<accession>Q04542</accession>
<sequence length="546" mass="58774">MMMASKDAPQSADGASGAGQLVPEVNTADPLPMEPVAGPTTAVATAGQVNMIDPWIVNNFVQSPQGEFTISPNNTPGDILFDLQLGPHLNPFLSHLSQMYNGWVGNMRVRILLAGNAFSAGKIIVCCVPPGFTSSSLTIAQATLFPHVIADVRTLEPIEMPLEDVRNVLYHTNDNQPTMRLVCMLYTPLRTGGGSGNSDSFVVAGRVLTAPSSDFSFLFLVPPTIEQKTRAFTVPNIPLQTLSNSRFPSLIQGMILSPDASQVVQFQNGRCLIDGQLLGTTPATSGQLFRVRGKINQGARTLNLTEVDGKPFMAFDSPAPVGFPDFGKCDWHMRISKTPNNTGSGDPMRSVSVQTNVQGFVPHLGSIQFDEVFNHPTGDYIGTIEWISQPSTPPGTDINLWEIPDYGSSLSQAANLAPPVFPPGFGEALVYFVSAFPGPNNRSAPNDVPCLLPQEYITHFVSEQAPTMGDAALLHYVDPDTNRNLGEFKLYPGGYLTCVPNGVGAGPQQLPLNGVFLFVSWVSRFYQLKPVGTASTARGRLGVRRI</sequence>
<proteinExistence type="inferred from homology"/>
<name>CAPSD_SOUV3</name>
<keyword id="KW-0167">Capsid protein</keyword>
<keyword id="KW-1035">Host cytoplasm</keyword>
<keyword id="KW-1142">T=3 icosahedral capsid protein</keyword>
<keyword id="KW-0946">Virion</keyword>
<feature type="chain" id="PRO_0000100119" description="Capsid protein VP1">
    <location>
        <begin position="1"/>
        <end position="546"/>
    </location>
</feature>
<feature type="chain" id="PRO_0000341983" description="Soluble capsid protein">
    <location>
        <begin position="228"/>
        <end position="546"/>
    </location>
</feature>
<feature type="region of interest" description="Shell domain" evidence="1">
    <location>
        <begin position="1"/>
        <end position="226"/>
    </location>
</feature>
<feature type="region of interest" description="Disordered" evidence="4">
    <location>
        <begin position="1"/>
        <end position="38"/>
    </location>
</feature>
<feature type="region of interest" description="Protruding domain" evidence="1">
    <location>
        <begin position="227"/>
        <end position="545"/>
    </location>
</feature>
<feature type="region of interest" description="P1 sub-domain 1" evidence="1">
    <location>
        <begin position="227"/>
        <end position="279"/>
    </location>
</feature>
<feature type="region of interest" description="P2 sub-domain" evidence="1">
    <location>
        <begin position="280"/>
        <end position="416"/>
    </location>
</feature>
<feature type="region of interest" description="P1 sub-domain 2" evidence="1">
    <location>
        <begin position="417"/>
        <end position="546"/>
    </location>
</feature>
<feature type="region of interest" description="Plays a role in binding to host histo-blood group structures antigens and in the formation of P-particles" evidence="3">
    <location>
        <begin position="538"/>
        <end position="545"/>
    </location>
</feature>
<feature type="site" description="Cleavage; by host" evidence="1">
    <location>
        <begin position="228"/>
        <end position="229"/>
    </location>
</feature>
<dbReference type="EMBL" id="L07418">
    <property type="protein sequence ID" value="AAA92984.1"/>
    <property type="molecule type" value="Genomic_RNA"/>
</dbReference>
<dbReference type="PIR" id="B37491">
    <property type="entry name" value="B37491"/>
</dbReference>
<dbReference type="SMR" id="Q04542"/>
<dbReference type="Proteomes" id="UP000007226">
    <property type="component" value="Genome"/>
</dbReference>
<dbReference type="GO" id="GO:0030430">
    <property type="term" value="C:host cell cytoplasm"/>
    <property type="evidence" value="ECO:0007669"/>
    <property type="project" value="UniProtKB-SubCell"/>
</dbReference>
<dbReference type="GO" id="GO:0039617">
    <property type="term" value="C:T=3 icosahedral viral capsid"/>
    <property type="evidence" value="ECO:0007669"/>
    <property type="project" value="UniProtKB-KW"/>
</dbReference>
<dbReference type="CDD" id="cd00205">
    <property type="entry name" value="rhv_like"/>
    <property type="match status" value="1"/>
</dbReference>
<dbReference type="Gene3D" id="2.60.120.20">
    <property type="match status" value="1"/>
</dbReference>
<dbReference type="Gene3D" id="2.40.30.120">
    <property type="entry name" value="Positive stranded ssRNA viruses"/>
    <property type="match status" value="1"/>
</dbReference>
<dbReference type="Gene3D" id="2.40.510.10">
    <property type="entry name" value="Positive stranded ssRNA viruses"/>
    <property type="match status" value="1"/>
</dbReference>
<dbReference type="InterPro" id="IPR004005">
    <property type="entry name" value="Calicivirus_coat"/>
</dbReference>
<dbReference type="InterPro" id="IPR013643">
    <property type="entry name" value="Calicivirus_coat_C"/>
</dbReference>
<dbReference type="InterPro" id="IPR033703">
    <property type="entry name" value="Rhv-like"/>
</dbReference>
<dbReference type="InterPro" id="IPR029053">
    <property type="entry name" value="Viral_coat"/>
</dbReference>
<dbReference type="Pfam" id="PF00915">
    <property type="entry name" value="Calici_coat"/>
    <property type="match status" value="1"/>
</dbReference>
<dbReference type="Pfam" id="PF08435">
    <property type="entry name" value="Calici_coat_C"/>
    <property type="match status" value="1"/>
</dbReference>
<dbReference type="SUPFAM" id="SSF88633">
    <property type="entry name" value="Positive stranded ssRNA viruses"/>
    <property type="match status" value="1"/>
</dbReference>
<organism>
    <name type="scientific">Southampton virus (strain GI/Human/United Kingdom/Southampton/1991)</name>
    <name type="common">SHV</name>
    <name type="synonym">Hu/NV/SHV/1991/UK</name>
    <dbReference type="NCBI Taxonomy" id="37129"/>
    <lineage>
        <taxon>Viruses</taxon>
        <taxon>Riboviria</taxon>
        <taxon>Orthornavirae</taxon>
        <taxon>Pisuviricota</taxon>
        <taxon>Pisoniviricetes</taxon>
        <taxon>Picornavirales</taxon>
        <taxon>Caliciviridae</taxon>
        <taxon>Norovirus</taxon>
        <taxon>Norwalk virus</taxon>
    </lineage>
</organism>
<organismHost>
    <name type="scientific">Homo sapiens</name>
    <name type="common">Human</name>
    <dbReference type="NCBI Taxonomy" id="9606"/>
</organismHost>
<protein>
    <recommendedName>
        <fullName>Capsid protein VP1</fullName>
        <shortName>CP</shortName>
    </recommendedName>
    <alternativeName>
        <fullName>Coat protein</fullName>
    </alternativeName>
    <component>
        <recommendedName>
            <fullName>Soluble capsid protein</fullName>
        </recommendedName>
    </component>
</protein>
<reference key="1">
    <citation type="journal article" date="1993" name="Science">
        <title>Sequence and genome organization of a human small round-structured (Norwalk-like) virus.</title>
        <authorList>
            <person name="Lambden P.R."/>
            <person name="Caul E.O."/>
            <person name="Ashley C.R."/>
            <person name="Clarke I.N."/>
        </authorList>
    </citation>
    <scope>NUCLEOTIDE SEQUENCE [GENOMIC RNA]</scope>
</reference>
<evidence type="ECO:0000250" key="1"/>
<evidence type="ECO:0000250" key="2">
    <source>
        <dbReference type="UniProtKB" id="P27406"/>
    </source>
</evidence>
<evidence type="ECO:0000250" key="3">
    <source>
        <dbReference type="UniProtKB" id="Q83884"/>
    </source>
</evidence>
<evidence type="ECO:0000256" key="4">
    <source>
        <dbReference type="SAM" id="MobiDB-lite"/>
    </source>
</evidence>
<evidence type="ECO:0000305" key="5"/>